<comment type="function">
    <text>Principal electron carrier in NADP-photoreduction.</text>
</comment>
<comment type="cofactor">
    <cofactor>
        <name>[2Fe-2S] cluster</name>
        <dbReference type="ChEBI" id="CHEBI:190135"/>
    </cofactor>
    <text>Binds 1 [2Fe-2S] cluster.</text>
</comment>
<comment type="subunit">
    <text evidence="1">Forms a complex with heterodimeric ferredoxin-thioredoxin reductase (FTR) and thioredoxin.</text>
</comment>
<comment type="similarity">
    <text evidence="3">Belongs to the 2Fe2S plant-type ferredoxin family.</text>
</comment>
<sequence>MPSFKVTLINETEGLNTTIEVPDDEYILDAAEEQGIDLPYSCRAGACSTCAGKITAGTVDQSDQSFLDDDQIQAGYVLTCVAYPTSDCTILTHQEEDLY</sequence>
<dbReference type="EMBL" id="U33848">
    <property type="protein sequence ID" value="AAA91131.1"/>
    <property type="molecule type" value="Genomic_DNA"/>
</dbReference>
<dbReference type="PDB" id="3B2G">
    <property type="method" value="X-ray"/>
    <property type="resolution" value="1.76 A"/>
    <property type="chains" value="A/B=2-99"/>
</dbReference>
<dbReference type="PDBsum" id="3B2G"/>
<dbReference type="SMR" id="Q51577"/>
<dbReference type="EvolutionaryTrace" id="Q51577"/>
<dbReference type="GO" id="GO:0051537">
    <property type="term" value="F:2 iron, 2 sulfur cluster binding"/>
    <property type="evidence" value="ECO:0007669"/>
    <property type="project" value="UniProtKB-KW"/>
</dbReference>
<dbReference type="GO" id="GO:0009055">
    <property type="term" value="F:electron transfer activity"/>
    <property type="evidence" value="ECO:0007669"/>
    <property type="project" value="InterPro"/>
</dbReference>
<dbReference type="GO" id="GO:0046872">
    <property type="term" value="F:metal ion binding"/>
    <property type="evidence" value="ECO:0007669"/>
    <property type="project" value="UniProtKB-KW"/>
</dbReference>
<dbReference type="GO" id="GO:0022900">
    <property type="term" value="P:electron transport chain"/>
    <property type="evidence" value="ECO:0007669"/>
    <property type="project" value="InterPro"/>
</dbReference>
<dbReference type="CDD" id="cd00207">
    <property type="entry name" value="fer2"/>
    <property type="match status" value="1"/>
</dbReference>
<dbReference type="FunFam" id="3.10.20.30:FF:000014">
    <property type="entry name" value="Ferredoxin"/>
    <property type="match status" value="1"/>
</dbReference>
<dbReference type="Gene3D" id="3.10.20.30">
    <property type="match status" value="1"/>
</dbReference>
<dbReference type="InterPro" id="IPR036010">
    <property type="entry name" value="2Fe-2S_ferredoxin-like_sf"/>
</dbReference>
<dbReference type="InterPro" id="IPR001041">
    <property type="entry name" value="2Fe-2S_ferredoxin-type"/>
</dbReference>
<dbReference type="InterPro" id="IPR006058">
    <property type="entry name" value="2Fe2S_fd_BS"/>
</dbReference>
<dbReference type="InterPro" id="IPR012675">
    <property type="entry name" value="Beta-grasp_dom_sf"/>
</dbReference>
<dbReference type="InterPro" id="IPR010241">
    <property type="entry name" value="Fd_pln"/>
</dbReference>
<dbReference type="NCBIfam" id="TIGR02008">
    <property type="entry name" value="fdx_plant"/>
    <property type="match status" value="1"/>
</dbReference>
<dbReference type="PANTHER" id="PTHR43112">
    <property type="entry name" value="FERREDOXIN"/>
    <property type="match status" value="1"/>
</dbReference>
<dbReference type="PANTHER" id="PTHR43112:SF3">
    <property type="entry name" value="FERREDOXIN-2, CHLOROPLASTIC"/>
    <property type="match status" value="1"/>
</dbReference>
<dbReference type="Pfam" id="PF00111">
    <property type="entry name" value="Fer2"/>
    <property type="match status" value="1"/>
</dbReference>
<dbReference type="SUPFAM" id="SSF54292">
    <property type="entry name" value="2Fe-2S ferredoxin-like"/>
    <property type="match status" value="1"/>
</dbReference>
<dbReference type="PROSITE" id="PS00197">
    <property type="entry name" value="2FE2S_FER_1"/>
    <property type="match status" value="1"/>
</dbReference>
<dbReference type="PROSITE" id="PS51085">
    <property type="entry name" value="2FE2S_FER_2"/>
    <property type="match status" value="1"/>
</dbReference>
<organism>
    <name type="scientific">Leptolyngbya boryana</name>
    <name type="common">Plectonema boryanum</name>
    <dbReference type="NCBI Taxonomy" id="1184"/>
    <lineage>
        <taxon>Bacteria</taxon>
        <taxon>Bacillati</taxon>
        <taxon>Cyanobacteriota</taxon>
        <taxon>Cyanophyceae</taxon>
        <taxon>Leptolyngbyales</taxon>
        <taxon>Leptolyngbyaceae</taxon>
        <taxon>Leptolyngbya group</taxon>
        <taxon>Leptolyngbya</taxon>
    </lineage>
</organism>
<reference key="1">
    <citation type="online journal article" date="1995" name="Plant Gene Register">
        <title>Nucleotide sequence, promoter structure and expression of the petF1 gene encoding the [2Fe-2S] ferredoxin I from the nitrogen-fixing nonheterocystous cyanobacterium Plectonema boryanum PCC 73110.</title>
        <authorList>
            <person name="Cassing A."/>
            <person name="Boehme H."/>
            <person name="Schrautemeier B."/>
        </authorList>
        <locator>PGR95-112</locator>
    </citation>
    <scope>NUCLEOTIDE SEQUENCE [GENOMIC DNA]</scope>
    <source>
        <strain>ATCC 18200 / UTEX 594 / PCC 73110</strain>
    </source>
</reference>
<gene>
    <name type="primary">petF1</name>
</gene>
<protein>
    <recommendedName>
        <fullName>Ferredoxin-1</fullName>
    </recommendedName>
    <alternativeName>
        <fullName>Ferredoxin I</fullName>
        <shortName>FdI</shortName>
    </alternativeName>
</protein>
<proteinExistence type="evidence at protein level"/>
<evidence type="ECO:0000250" key="1"/>
<evidence type="ECO:0000255" key="2">
    <source>
        <dbReference type="PROSITE-ProRule" id="PRU00465"/>
    </source>
</evidence>
<evidence type="ECO:0000305" key="3"/>
<evidence type="ECO:0007829" key="4">
    <source>
        <dbReference type="PDB" id="3B2G"/>
    </source>
</evidence>
<keyword id="KW-0001">2Fe-2S</keyword>
<keyword id="KW-0002">3D-structure</keyword>
<keyword id="KW-0249">Electron transport</keyword>
<keyword id="KW-0408">Iron</keyword>
<keyword id="KW-0411">Iron-sulfur</keyword>
<keyword id="KW-0479">Metal-binding</keyword>
<keyword id="KW-0813">Transport</keyword>
<name>FER1_LEPBY</name>
<feature type="chain" id="PRO_0000189352" description="Ferredoxin-1">
    <location>
        <begin position="1"/>
        <end position="99"/>
    </location>
</feature>
<feature type="domain" description="2Fe-2S ferredoxin-type" evidence="2">
    <location>
        <begin position="4"/>
        <end position="96"/>
    </location>
</feature>
<feature type="binding site" evidence="2">
    <location>
        <position position="42"/>
    </location>
    <ligand>
        <name>[2Fe-2S] cluster</name>
        <dbReference type="ChEBI" id="CHEBI:190135"/>
    </ligand>
</feature>
<feature type="binding site" evidence="2">
    <location>
        <position position="47"/>
    </location>
    <ligand>
        <name>[2Fe-2S] cluster</name>
        <dbReference type="ChEBI" id="CHEBI:190135"/>
    </ligand>
</feature>
<feature type="binding site" evidence="2">
    <location>
        <position position="50"/>
    </location>
    <ligand>
        <name>[2Fe-2S] cluster</name>
        <dbReference type="ChEBI" id="CHEBI:190135"/>
    </ligand>
</feature>
<feature type="binding site" evidence="2">
    <location>
        <position position="80"/>
    </location>
    <ligand>
        <name>[2Fe-2S] cluster</name>
        <dbReference type="ChEBI" id="CHEBI:190135"/>
    </ligand>
</feature>
<feature type="strand" evidence="4">
    <location>
        <begin position="3"/>
        <end position="10"/>
    </location>
</feature>
<feature type="helix" evidence="4">
    <location>
        <begin position="11"/>
        <end position="13"/>
    </location>
</feature>
<feature type="strand" evidence="4">
    <location>
        <begin position="15"/>
        <end position="22"/>
    </location>
</feature>
<feature type="helix" evidence="4">
    <location>
        <begin position="27"/>
        <end position="33"/>
    </location>
</feature>
<feature type="strand" evidence="4">
    <location>
        <begin position="43"/>
        <end position="48"/>
    </location>
</feature>
<feature type="strand" evidence="4">
    <location>
        <begin position="51"/>
        <end position="57"/>
    </location>
</feature>
<feature type="helix" evidence="4">
    <location>
        <begin position="69"/>
        <end position="73"/>
    </location>
</feature>
<feature type="strand" evidence="4">
    <location>
        <begin position="76"/>
        <end position="78"/>
    </location>
</feature>
<feature type="helix" evidence="4">
    <location>
        <begin position="79"/>
        <end position="81"/>
    </location>
</feature>
<feature type="strand" evidence="4">
    <location>
        <begin position="83"/>
        <end position="91"/>
    </location>
</feature>
<feature type="helix" evidence="4">
    <location>
        <begin position="95"/>
        <end position="98"/>
    </location>
</feature>
<accession>Q51577</accession>